<sequence length="329" mass="35790">MQTLAQHLSSQGIQAPLAQLLTTLADTSKAISHAVRHGALAGVLGATEQENVQGETQKKLDVITNDMLKEALTADSTVRGLASEEEDHIVEVGQSGDFLVCFDPLDGSSNIDINSLVGTIFSVLPAPSGELSEQSFLQPGRQQVAAGYVLYGPSTMLALTTGQGVQLFTLNPETNEYLLTNEAMSISKDTSEFAINMSNQRFWEAPMQTYIADLLLGKIGPREKSFNMRWIAAMVGDVHRVLSRGGLFTYPTDNKNPEKPYKLRLMYEANPMSFLVEQAGGKASTGYETIMDILPSEIHQRVAVILGSANEVDACLEYHGQDYSEEPSL</sequence>
<dbReference type="EC" id="3.1.3.11" evidence="1"/>
<dbReference type="EMBL" id="CP000606">
    <property type="protein sequence ID" value="ABO22645.1"/>
    <property type="molecule type" value="Genomic_DNA"/>
</dbReference>
<dbReference type="RefSeq" id="WP_011864579.1">
    <property type="nucleotide sequence ID" value="NC_009092.1"/>
</dbReference>
<dbReference type="SMR" id="A3QAZ7"/>
<dbReference type="STRING" id="323850.Shew_0773"/>
<dbReference type="KEGG" id="slo:Shew_0773"/>
<dbReference type="eggNOG" id="COG0158">
    <property type="taxonomic scope" value="Bacteria"/>
</dbReference>
<dbReference type="HOGENOM" id="CLU_039977_0_0_6"/>
<dbReference type="OrthoDB" id="9806756at2"/>
<dbReference type="UniPathway" id="UPA00138"/>
<dbReference type="Proteomes" id="UP000001558">
    <property type="component" value="Chromosome"/>
</dbReference>
<dbReference type="GO" id="GO:0005829">
    <property type="term" value="C:cytosol"/>
    <property type="evidence" value="ECO:0007669"/>
    <property type="project" value="TreeGrafter"/>
</dbReference>
<dbReference type="GO" id="GO:0042132">
    <property type="term" value="F:fructose 1,6-bisphosphate 1-phosphatase activity"/>
    <property type="evidence" value="ECO:0007669"/>
    <property type="project" value="UniProtKB-UniRule"/>
</dbReference>
<dbReference type="GO" id="GO:0000287">
    <property type="term" value="F:magnesium ion binding"/>
    <property type="evidence" value="ECO:0007669"/>
    <property type="project" value="UniProtKB-UniRule"/>
</dbReference>
<dbReference type="GO" id="GO:0030388">
    <property type="term" value="P:fructose 1,6-bisphosphate metabolic process"/>
    <property type="evidence" value="ECO:0007669"/>
    <property type="project" value="TreeGrafter"/>
</dbReference>
<dbReference type="GO" id="GO:0006002">
    <property type="term" value="P:fructose 6-phosphate metabolic process"/>
    <property type="evidence" value="ECO:0007669"/>
    <property type="project" value="TreeGrafter"/>
</dbReference>
<dbReference type="GO" id="GO:0006000">
    <property type="term" value="P:fructose metabolic process"/>
    <property type="evidence" value="ECO:0007669"/>
    <property type="project" value="TreeGrafter"/>
</dbReference>
<dbReference type="GO" id="GO:0006094">
    <property type="term" value="P:gluconeogenesis"/>
    <property type="evidence" value="ECO:0007669"/>
    <property type="project" value="UniProtKB-UniRule"/>
</dbReference>
<dbReference type="GO" id="GO:0005986">
    <property type="term" value="P:sucrose biosynthetic process"/>
    <property type="evidence" value="ECO:0007669"/>
    <property type="project" value="TreeGrafter"/>
</dbReference>
<dbReference type="CDD" id="cd00354">
    <property type="entry name" value="FBPase"/>
    <property type="match status" value="1"/>
</dbReference>
<dbReference type="FunFam" id="3.40.190.80:FF:000011">
    <property type="entry name" value="Fructose-1,6-bisphosphatase class 1"/>
    <property type="match status" value="1"/>
</dbReference>
<dbReference type="Gene3D" id="3.40.190.80">
    <property type="match status" value="1"/>
</dbReference>
<dbReference type="Gene3D" id="3.30.540.10">
    <property type="entry name" value="Fructose-1,6-Bisphosphatase, subunit A, domain 1"/>
    <property type="match status" value="1"/>
</dbReference>
<dbReference type="HAMAP" id="MF_01855">
    <property type="entry name" value="FBPase_class1"/>
    <property type="match status" value="1"/>
</dbReference>
<dbReference type="InterPro" id="IPR044015">
    <property type="entry name" value="FBPase_C_dom"/>
</dbReference>
<dbReference type="InterPro" id="IPR000146">
    <property type="entry name" value="FBPase_class-1"/>
</dbReference>
<dbReference type="InterPro" id="IPR033391">
    <property type="entry name" value="FBPase_N"/>
</dbReference>
<dbReference type="InterPro" id="IPR028343">
    <property type="entry name" value="FBPtase"/>
</dbReference>
<dbReference type="NCBIfam" id="NF006779">
    <property type="entry name" value="PRK09293.1-3"/>
    <property type="match status" value="1"/>
</dbReference>
<dbReference type="NCBIfam" id="NF006780">
    <property type="entry name" value="PRK09293.1-4"/>
    <property type="match status" value="1"/>
</dbReference>
<dbReference type="PANTHER" id="PTHR11556">
    <property type="entry name" value="FRUCTOSE-1,6-BISPHOSPHATASE-RELATED"/>
    <property type="match status" value="1"/>
</dbReference>
<dbReference type="PANTHER" id="PTHR11556:SF35">
    <property type="entry name" value="SEDOHEPTULOSE-1,7-BISPHOSPHATASE, CHLOROPLASTIC"/>
    <property type="match status" value="1"/>
</dbReference>
<dbReference type="Pfam" id="PF00316">
    <property type="entry name" value="FBPase"/>
    <property type="match status" value="1"/>
</dbReference>
<dbReference type="Pfam" id="PF18913">
    <property type="entry name" value="FBPase_C"/>
    <property type="match status" value="1"/>
</dbReference>
<dbReference type="PIRSF" id="PIRSF500210">
    <property type="entry name" value="FBPtase"/>
    <property type="match status" value="1"/>
</dbReference>
<dbReference type="PIRSF" id="PIRSF000904">
    <property type="entry name" value="FBPtase_SBPase"/>
    <property type="match status" value="1"/>
</dbReference>
<dbReference type="PRINTS" id="PR00115">
    <property type="entry name" value="F16BPHPHTASE"/>
</dbReference>
<dbReference type="SUPFAM" id="SSF56655">
    <property type="entry name" value="Carbohydrate phosphatase"/>
    <property type="match status" value="1"/>
</dbReference>
<accession>A3QAZ7</accession>
<gene>
    <name evidence="1" type="primary">fbp</name>
    <name type="ordered locus">Shew_0773</name>
</gene>
<proteinExistence type="inferred from homology"/>
<evidence type="ECO:0000255" key="1">
    <source>
        <dbReference type="HAMAP-Rule" id="MF_01855"/>
    </source>
</evidence>
<keyword id="KW-0119">Carbohydrate metabolism</keyword>
<keyword id="KW-0963">Cytoplasm</keyword>
<keyword id="KW-0378">Hydrolase</keyword>
<keyword id="KW-0460">Magnesium</keyword>
<keyword id="KW-0479">Metal-binding</keyword>
<keyword id="KW-1185">Reference proteome</keyword>
<feature type="chain" id="PRO_0000364706" description="Fructose-1,6-bisphosphatase class 1">
    <location>
        <begin position="1"/>
        <end position="329"/>
    </location>
</feature>
<feature type="binding site" evidence="1">
    <location>
        <position position="84"/>
    </location>
    <ligand>
        <name>Mg(2+)</name>
        <dbReference type="ChEBI" id="CHEBI:18420"/>
        <label>1</label>
    </ligand>
</feature>
<feature type="binding site" evidence="1">
    <location>
        <position position="103"/>
    </location>
    <ligand>
        <name>Mg(2+)</name>
        <dbReference type="ChEBI" id="CHEBI:18420"/>
        <label>1</label>
    </ligand>
</feature>
<feature type="binding site" evidence="1">
    <location>
        <position position="103"/>
    </location>
    <ligand>
        <name>Mg(2+)</name>
        <dbReference type="ChEBI" id="CHEBI:18420"/>
        <label>2</label>
    </ligand>
</feature>
<feature type="binding site" evidence="1">
    <location>
        <position position="105"/>
    </location>
    <ligand>
        <name>Mg(2+)</name>
        <dbReference type="ChEBI" id="CHEBI:18420"/>
        <label>1</label>
    </ligand>
</feature>
<feature type="binding site" evidence="1">
    <location>
        <begin position="106"/>
        <end position="109"/>
    </location>
    <ligand>
        <name>substrate</name>
    </ligand>
</feature>
<feature type="binding site" evidence="1">
    <location>
        <position position="106"/>
    </location>
    <ligand>
        <name>Mg(2+)</name>
        <dbReference type="ChEBI" id="CHEBI:18420"/>
        <label>2</label>
    </ligand>
</feature>
<feature type="binding site" evidence="1">
    <location>
        <position position="196"/>
    </location>
    <ligand>
        <name>substrate</name>
    </ligand>
</feature>
<feature type="binding site" evidence="1">
    <location>
        <position position="262"/>
    </location>
    <ligand>
        <name>substrate</name>
    </ligand>
</feature>
<feature type="binding site" evidence="1">
    <location>
        <position position="268"/>
    </location>
    <ligand>
        <name>Mg(2+)</name>
        <dbReference type="ChEBI" id="CHEBI:18420"/>
        <label>2</label>
    </ligand>
</feature>
<comment type="catalytic activity">
    <reaction evidence="1">
        <text>beta-D-fructose 1,6-bisphosphate + H2O = beta-D-fructose 6-phosphate + phosphate</text>
        <dbReference type="Rhea" id="RHEA:11064"/>
        <dbReference type="ChEBI" id="CHEBI:15377"/>
        <dbReference type="ChEBI" id="CHEBI:32966"/>
        <dbReference type="ChEBI" id="CHEBI:43474"/>
        <dbReference type="ChEBI" id="CHEBI:57634"/>
        <dbReference type="EC" id="3.1.3.11"/>
    </reaction>
</comment>
<comment type="cofactor">
    <cofactor evidence="1">
        <name>Mg(2+)</name>
        <dbReference type="ChEBI" id="CHEBI:18420"/>
    </cofactor>
    <text evidence="1">Binds 2 magnesium ions per subunit.</text>
</comment>
<comment type="pathway">
    <text evidence="1">Carbohydrate biosynthesis; gluconeogenesis.</text>
</comment>
<comment type="subunit">
    <text evidence="1">Homotetramer.</text>
</comment>
<comment type="subcellular location">
    <subcellularLocation>
        <location evidence="1">Cytoplasm</location>
    </subcellularLocation>
</comment>
<comment type="similarity">
    <text evidence="1">Belongs to the FBPase class 1 family.</text>
</comment>
<organism>
    <name type="scientific">Shewanella loihica (strain ATCC BAA-1088 / PV-4)</name>
    <dbReference type="NCBI Taxonomy" id="323850"/>
    <lineage>
        <taxon>Bacteria</taxon>
        <taxon>Pseudomonadati</taxon>
        <taxon>Pseudomonadota</taxon>
        <taxon>Gammaproteobacteria</taxon>
        <taxon>Alteromonadales</taxon>
        <taxon>Shewanellaceae</taxon>
        <taxon>Shewanella</taxon>
    </lineage>
</organism>
<reference key="1">
    <citation type="submission" date="2007-03" db="EMBL/GenBank/DDBJ databases">
        <title>Complete sequence of Shewanella loihica PV-4.</title>
        <authorList>
            <consortium name="US DOE Joint Genome Institute"/>
            <person name="Copeland A."/>
            <person name="Lucas S."/>
            <person name="Lapidus A."/>
            <person name="Barry K."/>
            <person name="Detter J.C."/>
            <person name="Glavina del Rio T."/>
            <person name="Hammon N."/>
            <person name="Israni S."/>
            <person name="Dalin E."/>
            <person name="Tice H."/>
            <person name="Pitluck S."/>
            <person name="Chain P."/>
            <person name="Malfatti S."/>
            <person name="Shin M."/>
            <person name="Vergez L."/>
            <person name="Schmutz J."/>
            <person name="Larimer F."/>
            <person name="Land M."/>
            <person name="Hauser L."/>
            <person name="Kyrpides N."/>
            <person name="Mikhailova N."/>
            <person name="Romine M.F."/>
            <person name="Serres G."/>
            <person name="Fredrickson J."/>
            <person name="Tiedje J."/>
            <person name="Richardson P."/>
        </authorList>
    </citation>
    <scope>NUCLEOTIDE SEQUENCE [LARGE SCALE GENOMIC DNA]</scope>
    <source>
        <strain>ATCC BAA-1088 / PV-4</strain>
    </source>
</reference>
<name>F16PA_SHELP</name>
<protein>
    <recommendedName>
        <fullName evidence="1">Fructose-1,6-bisphosphatase class 1</fullName>
        <shortName evidence="1">FBPase class 1</shortName>
        <ecNumber evidence="1">3.1.3.11</ecNumber>
    </recommendedName>
    <alternativeName>
        <fullName evidence="1">D-fructose-1,6-bisphosphate 1-phosphohydrolase class 1</fullName>
    </alternativeName>
</protein>